<sequence>MPTISVGRDRLFAALGESYTQEKFEELCFSFGIELDDVTTEKAIIRKEKHIDEEADDDEEIIYKIEIPANRPDLLCLEGLAQSLRVFIEKQEIPTYTLADISKDKILQMNVKPETSKIRPFVVCAVLRGVTFDEARYNSFIDLQDKLHQNICRRRSLVAIGTHDLDTLQGPFTYEALPPTDINFVPLKQTKSFRADELIEFYKSDMKLKKFLHIIENSPVFPVLYDSKRTVLSLPPIINGAHSAITLQTKNVFIECTATDLTKAKIVLNTMVTTFSEFCARKFEIEPVEVTYDDGKSYIYPDLAVYDMEVPLSFITDSIGVSLKVEQVTSLLTRMQLQAEQAKSSDNQCAIKVHVPPSRSDVLHPCDVMEDVAIAYGFNNIPTRKPASIKPLTLNELTDLLRIEIAMCVYTEVVTWLLCSHKENFAMLNREDVNSAVIVGNPRSADFEAMRRALMPGLLKTVGHNNKYPKPIKIFEISDVVMLDESKDVGASNRRHLAALYCGATSGFELIHGLVDRIMEVMAIPFLTIHENNVPINEKDGYYVKLSQEPEFLPGRQASIIVRGKHIGNFGIVHPEVLNNFDIPDPCSYLELDIEAIL</sequence>
<dbReference type="EC" id="6.1.1.20" evidence="4"/>
<dbReference type="EMBL" id="AC010926">
    <property type="protein sequence ID" value="AAG51865.1"/>
    <property type="molecule type" value="Genomic_DNA"/>
</dbReference>
<dbReference type="EMBL" id="CP002684">
    <property type="protein sequence ID" value="AEE35338.1"/>
    <property type="molecule type" value="Genomic_DNA"/>
</dbReference>
<dbReference type="EMBL" id="AY062707">
    <property type="protein sequence ID" value="AAL32785.1"/>
    <property type="molecule type" value="mRNA"/>
</dbReference>
<dbReference type="EMBL" id="AY128795">
    <property type="protein sequence ID" value="AAM91195.1"/>
    <property type="molecule type" value="mRNA"/>
</dbReference>
<dbReference type="PIR" id="H96749">
    <property type="entry name" value="H96749"/>
</dbReference>
<dbReference type="RefSeq" id="NP_177399.1">
    <molecule id="Q9SGE9-1"/>
    <property type="nucleotide sequence ID" value="NM_105914.5"/>
</dbReference>
<dbReference type="SMR" id="Q9SGE9"/>
<dbReference type="BioGRID" id="28806">
    <property type="interactions" value="3"/>
</dbReference>
<dbReference type="FunCoup" id="Q9SGE9">
    <property type="interactions" value="4974"/>
</dbReference>
<dbReference type="STRING" id="3702.Q9SGE9"/>
<dbReference type="iPTMnet" id="Q9SGE9"/>
<dbReference type="PaxDb" id="3702-AT1G72550.1"/>
<dbReference type="ProteomicsDB" id="234125">
    <molecule id="Q9SGE9-1"/>
</dbReference>
<dbReference type="EnsemblPlants" id="AT1G72550.1">
    <molecule id="Q9SGE9-1"/>
    <property type="protein sequence ID" value="AT1G72550.1"/>
    <property type="gene ID" value="AT1G72550"/>
</dbReference>
<dbReference type="GeneID" id="843587"/>
<dbReference type="Gramene" id="AT1G72550.1">
    <molecule id="Q9SGE9-1"/>
    <property type="protein sequence ID" value="AT1G72550.1"/>
    <property type="gene ID" value="AT1G72550"/>
</dbReference>
<dbReference type="KEGG" id="ath:AT1G72550"/>
<dbReference type="Araport" id="AT1G72550"/>
<dbReference type="TAIR" id="AT1G72550"/>
<dbReference type="eggNOG" id="KOG2472">
    <property type="taxonomic scope" value="Eukaryota"/>
</dbReference>
<dbReference type="HOGENOM" id="CLU_020279_2_0_1"/>
<dbReference type="InParanoid" id="Q9SGE9"/>
<dbReference type="OMA" id="FPGRCAN"/>
<dbReference type="OrthoDB" id="1698572at2759"/>
<dbReference type="PhylomeDB" id="Q9SGE9"/>
<dbReference type="CD-CODE" id="4299E36E">
    <property type="entry name" value="Nucleolus"/>
</dbReference>
<dbReference type="PRO" id="PR:Q9SGE9"/>
<dbReference type="Proteomes" id="UP000006548">
    <property type="component" value="Chromosome 1"/>
</dbReference>
<dbReference type="ExpressionAtlas" id="Q9SGE9">
    <property type="expression patterns" value="baseline and differential"/>
</dbReference>
<dbReference type="GO" id="GO:0005829">
    <property type="term" value="C:cytosol"/>
    <property type="evidence" value="ECO:0007669"/>
    <property type="project" value="UniProtKB-SubCell"/>
</dbReference>
<dbReference type="GO" id="GO:0005739">
    <property type="term" value="C:mitochondrion"/>
    <property type="evidence" value="ECO:0007005"/>
    <property type="project" value="TAIR"/>
</dbReference>
<dbReference type="GO" id="GO:0005524">
    <property type="term" value="F:ATP binding"/>
    <property type="evidence" value="ECO:0007669"/>
    <property type="project" value="UniProtKB-KW"/>
</dbReference>
<dbReference type="GO" id="GO:0000287">
    <property type="term" value="F:magnesium ion binding"/>
    <property type="evidence" value="ECO:0000250"/>
    <property type="project" value="UniProtKB"/>
</dbReference>
<dbReference type="GO" id="GO:0004826">
    <property type="term" value="F:phenylalanine-tRNA ligase activity"/>
    <property type="evidence" value="ECO:0007669"/>
    <property type="project" value="UniProtKB-EC"/>
</dbReference>
<dbReference type="GO" id="GO:0003723">
    <property type="term" value="F:RNA binding"/>
    <property type="evidence" value="ECO:0007669"/>
    <property type="project" value="InterPro"/>
</dbReference>
<dbReference type="GO" id="GO:0006432">
    <property type="term" value="P:phenylalanyl-tRNA aminoacylation"/>
    <property type="evidence" value="ECO:0007669"/>
    <property type="project" value="InterPro"/>
</dbReference>
<dbReference type="CDD" id="cd00769">
    <property type="entry name" value="PheRS_beta_core"/>
    <property type="match status" value="1"/>
</dbReference>
<dbReference type="FunFam" id="3.30.56.10:FF:000005">
    <property type="entry name" value="Phenylalanine--tRNA ligase beta subunit"/>
    <property type="match status" value="1"/>
</dbReference>
<dbReference type="FunFam" id="3.30.930.10:FF:000059">
    <property type="entry name" value="phenylalanine--tRNA ligase beta subunit"/>
    <property type="match status" value="1"/>
</dbReference>
<dbReference type="FunFam" id="3.50.40.10:FF:000002">
    <property type="entry name" value="phenylalanine--tRNA ligase beta subunit"/>
    <property type="match status" value="1"/>
</dbReference>
<dbReference type="FunFam" id="3.30.56.10:FF:000004">
    <property type="entry name" value="Phenylalanyl-tRNA synthetase, beta subunit"/>
    <property type="match status" value="1"/>
</dbReference>
<dbReference type="Gene3D" id="3.30.56.10">
    <property type="match status" value="2"/>
</dbReference>
<dbReference type="Gene3D" id="3.30.930.10">
    <property type="entry name" value="Bira Bifunctional Protein, Domain 2"/>
    <property type="match status" value="1"/>
</dbReference>
<dbReference type="Gene3D" id="3.50.40.10">
    <property type="entry name" value="Phenylalanyl-trna Synthetase, Chain B, domain 3"/>
    <property type="match status" value="1"/>
</dbReference>
<dbReference type="InterPro" id="IPR045864">
    <property type="entry name" value="aa-tRNA-synth_II/BPL/LPL"/>
</dbReference>
<dbReference type="InterPro" id="IPR005146">
    <property type="entry name" value="B3/B4_tRNA-bd"/>
</dbReference>
<dbReference type="InterPro" id="IPR009061">
    <property type="entry name" value="DNA-bd_dom_put_sf"/>
</dbReference>
<dbReference type="InterPro" id="IPR045060">
    <property type="entry name" value="Phe-tRNA-ligase_IIc_bsu"/>
</dbReference>
<dbReference type="InterPro" id="IPR004531">
    <property type="entry name" value="Phe-tRNA-synth_IIc_bsu_arc_euk"/>
</dbReference>
<dbReference type="InterPro" id="IPR020825">
    <property type="entry name" value="Phe-tRNA_synthase-like_B3/B4"/>
</dbReference>
<dbReference type="InterPro" id="IPR041616">
    <property type="entry name" value="PheRS_beta_core"/>
</dbReference>
<dbReference type="InterPro" id="IPR040659">
    <property type="entry name" value="PhetRS_B1"/>
</dbReference>
<dbReference type="InterPro" id="IPR005147">
    <property type="entry name" value="tRNA_synthase_B5-dom"/>
</dbReference>
<dbReference type="NCBIfam" id="TIGR00471">
    <property type="entry name" value="pheT_arch"/>
    <property type="match status" value="1"/>
</dbReference>
<dbReference type="PANTHER" id="PTHR10947:SF0">
    <property type="entry name" value="PHENYLALANINE--TRNA LIGASE BETA SUBUNIT"/>
    <property type="match status" value="1"/>
</dbReference>
<dbReference type="PANTHER" id="PTHR10947">
    <property type="entry name" value="PHENYLALANYL-TRNA SYNTHETASE BETA CHAIN AND LEUCINE-RICH REPEAT-CONTAINING PROTEIN 47"/>
    <property type="match status" value="1"/>
</dbReference>
<dbReference type="Pfam" id="PF03483">
    <property type="entry name" value="B3_4"/>
    <property type="match status" value="1"/>
</dbReference>
<dbReference type="Pfam" id="PF03484">
    <property type="entry name" value="B5"/>
    <property type="match status" value="1"/>
</dbReference>
<dbReference type="Pfam" id="PF18262">
    <property type="entry name" value="PhetRS_B1"/>
    <property type="match status" value="1"/>
</dbReference>
<dbReference type="Pfam" id="PF17759">
    <property type="entry name" value="tRNA_synthFbeta"/>
    <property type="match status" value="1"/>
</dbReference>
<dbReference type="SMART" id="SM00873">
    <property type="entry name" value="B3_4"/>
    <property type="match status" value="1"/>
</dbReference>
<dbReference type="SMART" id="SM00874">
    <property type="entry name" value="B5"/>
    <property type="match status" value="1"/>
</dbReference>
<dbReference type="SUPFAM" id="SSF55681">
    <property type="entry name" value="Class II aaRS and biotin synthetases"/>
    <property type="match status" value="1"/>
</dbReference>
<dbReference type="SUPFAM" id="SSF56037">
    <property type="entry name" value="PheT/TilS domain"/>
    <property type="match status" value="1"/>
</dbReference>
<dbReference type="SUPFAM" id="SSF46955">
    <property type="entry name" value="Putative DNA-binding domain"/>
    <property type="match status" value="2"/>
</dbReference>
<dbReference type="PROSITE" id="PS51483">
    <property type="entry name" value="B5"/>
    <property type="match status" value="1"/>
</dbReference>
<comment type="catalytic activity">
    <reaction evidence="4">
        <text>tRNA(Phe) + L-phenylalanine + ATP = L-phenylalanyl-tRNA(Phe) + AMP + diphosphate + H(+)</text>
        <dbReference type="Rhea" id="RHEA:19413"/>
        <dbReference type="Rhea" id="RHEA-COMP:9668"/>
        <dbReference type="Rhea" id="RHEA-COMP:9699"/>
        <dbReference type="ChEBI" id="CHEBI:15378"/>
        <dbReference type="ChEBI" id="CHEBI:30616"/>
        <dbReference type="ChEBI" id="CHEBI:33019"/>
        <dbReference type="ChEBI" id="CHEBI:58095"/>
        <dbReference type="ChEBI" id="CHEBI:78442"/>
        <dbReference type="ChEBI" id="CHEBI:78531"/>
        <dbReference type="ChEBI" id="CHEBI:456215"/>
        <dbReference type="EC" id="6.1.1.20"/>
    </reaction>
</comment>
<comment type="cofactor">
    <cofactor evidence="2">
        <name>Mg(2+)</name>
        <dbReference type="ChEBI" id="CHEBI:18420"/>
    </cofactor>
</comment>
<comment type="subunit">
    <text evidence="1">Tetramer of two alpha and two beta subunits.</text>
</comment>
<comment type="subcellular location">
    <subcellularLocation>
        <location evidence="5 6">Cytoplasm</location>
        <location evidence="5 6">Cytosol</location>
    </subcellularLocation>
</comment>
<comment type="alternative products">
    <event type="alternative splicing"/>
    <isoform>
        <id>Q9SGE9-1</id>
        <name>1</name>
        <sequence type="displayed"/>
    </isoform>
    <text>A number of isoforms are produced. According to EST sequences.</text>
</comment>
<comment type="similarity">
    <text evidence="4">Belongs to the phenylalanyl-tRNA synthetase beta subunit family. Type 2 subfamily.</text>
</comment>
<reference key="1">
    <citation type="journal article" date="2000" name="Nature">
        <title>Sequence and analysis of chromosome 1 of the plant Arabidopsis thaliana.</title>
        <authorList>
            <person name="Theologis A."/>
            <person name="Ecker J.R."/>
            <person name="Palm C.J."/>
            <person name="Federspiel N.A."/>
            <person name="Kaul S."/>
            <person name="White O."/>
            <person name="Alonso J."/>
            <person name="Altafi H."/>
            <person name="Araujo R."/>
            <person name="Bowman C.L."/>
            <person name="Brooks S.Y."/>
            <person name="Buehler E."/>
            <person name="Chan A."/>
            <person name="Chao Q."/>
            <person name="Chen H."/>
            <person name="Cheuk R.F."/>
            <person name="Chin C.W."/>
            <person name="Chung M.K."/>
            <person name="Conn L."/>
            <person name="Conway A.B."/>
            <person name="Conway A.R."/>
            <person name="Creasy T.H."/>
            <person name="Dewar K."/>
            <person name="Dunn P."/>
            <person name="Etgu P."/>
            <person name="Feldblyum T.V."/>
            <person name="Feng J.-D."/>
            <person name="Fong B."/>
            <person name="Fujii C.Y."/>
            <person name="Gill J.E."/>
            <person name="Goldsmith A.D."/>
            <person name="Haas B."/>
            <person name="Hansen N.F."/>
            <person name="Hughes B."/>
            <person name="Huizar L."/>
            <person name="Hunter J.L."/>
            <person name="Jenkins J."/>
            <person name="Johnson-Hopson C."/>
            <person name="Khan S."/>
            <person name="Khaykin E."/>
            <person name="Kim C.J."/>
            <person name="Koo H.L."/>
            <person name="Kremenetskaia I."/>
            <person name="Kurtz D.B."/>
            <person name="Kwan A."/>
            <person name="Lam B."/>
            <person name="Langin-Hooper S."/>
            <person name="Lee A."/>
            <person name="Lee J.M."/>
            <person name="Lenz C.A."/>
            <person name="Li J.H."/>
            <person name="Li Y.-P."/>
            <person name="Lin X."/>
            <person name="Liu S.X."/>
            <person name="Liu Z.A."/>
            <person name="Luros J.S."/>
            <person name="Maiti R."/>
            <person name="Marziali A."/>
            <person name="Militscher J."/>
            <person name="Miranda M."/>
            <person name="Nguyen M."/>
            <person name="Nierman W.C."/>
            <person name="Osborne B.I."/>
            <person name="Pai G."/>
            <person name="Peterson J."/>
            <person name="Pham P.K."/>
            <person name="Rizzo M."/>
            <person name="Rooney T."/>
            <person name="Rowley D."/>
            <person name="Sakano H."/>
            <person name="Salzberg S.L."/>
            <person name="Schwartz J.R."/>
            <person name="Shinn P."/>
            <person name="Southwick A.M."/>
            <person name="Sun H."/>
            <person name="Tallon L.J."/>
            <person name="Tambunga G."/>
            <person name="Toriumi M.J."/>
            <person name="Town C.D."/>
            <person name="Utterback T."/>
            <person name="Van Aken S."/>
            <person name="Vaysberg M."/>
            <person name="Vysotskaia V.S."/>
            <person name="Walker M."/>
            <person name="Wu D."/>
            <person name="Yu G."/>
            <person name="Fraser C.M."/>
            <person name="Venter J.C."/>
            <person name="Davis R.W."/>
        </authorList>
    </citation>
    <scope>NUCLEOTIDE SEQUENCE [LARGE SCALE GENOMIC DNA]</scope>
    <source>
        <strain>cv. Columbia</strain>
    </source>
</reference>
<reference key="2">
    <citation type="journal article" date="2017" name="Plant J.">
        <title>Araport11: a complete reannotation of the Arabidopsis thaliana reference genome.</title>
        <authorList>
            <person name="Cheng C.Y."/>
            <person name="Krishnakumar V."/>
            <person name="Chan A.P."/>
            <person name="Thibaud-Nissen F."/>
            <person name="Schobel S."/>
            <person name="Town C.D."/>
        </authorList>
    </citation>
    <scope>GENOME REANNOTATION</scope>
    <source>
        <strain>cv. Columbia</strain>
    </source>
</reference>
<reference key="3">
    <citation type="journal article" date="2003" name="Science">
        <title>Empirical analysis of transcriptional activity in the Arabidopsis genome.</title>
        <authorList>
            <person name="Yamada K."/>
            <person name="Lim J."/>
            <person name="Dale J.M."/>
            <person name="Chen H."/>
            <person name="Shinn P."/>
            <person name="Palm C.J."/>
            <person name="Southwick A.M."/>
            <person name="Wu H.C."/>
            <person name="Kim C.J."/>
            <person name="Nguyen M."/>
            <person name="Pham P.K."/>
            <person name="Cheuk R.F."/>
            <person name="Karlin-Newmann G."/>
            <person name="Liu S.X."/>
            <person name="Lam B."/>
            <person name="Sakano H."/>
            <person name="Wu T."/>
            <person name="Yu G."/>
            <person name="Miranda M."/>
            <person name="Quach H.L."/>
            <person name="Tripp M."/>
            <person name="Chang C.H."/>
            <person name="Lee J.M."/>
            <person name="Toriumi M.J."/>
            <person name="Chan M.M."/>
            <person name="Tang C.C."/>
            <person name="Onodera C.S."/>
            <person name="Deng J.M."/>
            <person name="Akiyama K."/>
            <person name="Ansari Y."/>
            <person name="Arakawa T."/>
            <person name="Banh J."/>
            <person name="Banno F."/>
            <person name="Bowser L."/>
            <person name="Brooks S.Y."/>
            <person name="Carninci P."/>
            <person name="Chao Q."/>
            <person name="Choy N."/>
            <person name="Enju A."/>
            <person name="Goldsmith A.D."/>
            <person name="Gurjal M."/>
            <person name="Hansen N.F."/>
            <person name="Hayashizaki Y."/>
            <person name="Johnson-Hopson C."/>
            <person name="Hsuan V.W."/>
            <person name="Iida K."/>
            <person name="Karnes M."/>
            <person name="Khan S."/>
            <person name="Koesema E."/>
            <person name="Ishida J."/>
            <person name="Jiang P.X."/>
            <person name="Jones T."/>
            <person name="Kawai J."/>
            <person name="Kamiya A."/>
            <person name="Meyers C."/>
            <person name="Nakajima M."/>
            <person name="Narusaka M."/>
            <person name="Seki M."/>
            <person name="Sakurai T."/>
            <person name="Satou M."/>
            <person name="Tamse R."/>
            <person name="Vaysberg M."/>
            <person name="Wallender E.K."/>
            <person name="Wong C."/>
            <person name="Yamamura Y."/>
            <person name="Yuan S."/>
            <person name="Shinozaki K."/>
            <person name="Davis R.W."/>
            <person name="Theologis A."/>
            <person name="Ecker J.R."/>
        </authorList>
    </citation>
    <scope>NUCLEOTIDE SEQUENCE [LARGE SCALE MRNA]</scope>
    <source>
        <strain>cv. Columbia</strain>
    </source>
</reference>
<reference key="4">
    <citation type="journal article" date="2005" name="Plant J.">
        <title>Requirement of aminoacyl-tRNA synthetases for gametogenesis and embryo development in Arabidopsis.</title>
        <authorList>
            <person name="Berg M."/>
            <person name="Rogers R."/>
            <person name="Muralla R."/>
            <person name="Meinke D."/>
        </authorList>
    </citation>
    <scope>SUBCELLULAR LOCATION</scope>
</reference>
<reference key="5">
    <citation type="journal article" date="2005" name="Proc. Natl. Acad. Sci. U.S.A.">
        <title>Dual targeting is the rule for organellar aminoacyl-tRNA synthetases in Arabidopsis thaliana.</title>
        <authorList>
            <person name="Duchene A.-M."/>
            <person name="Giritch A."/>
            <person name="Hoffmann B."/>
            <person name="Cognat V."/>
            <person name="Lancelin D."/>
            <person name="Peeters N.M."/>
            <person name="Zaepfel M."/>
            <person name="Marechal-Drouard L."/>
            <person name="Small I.D."/>
        </authorList>
    </citation>
    <scope>SUBCELLULAR LOCATION</scope>
</reference>
<protein>
    <recommendedName>
        <fullName evidence="4">Phenylalanine--tRNA ligase beta subunit, cytoplasmic</fullName>
        <ecNumber evidence="4">6.1.1.20</ecNumber>
    </recommendedName>
    <alternativeName>
        <fullName evidence="4">Phenylalanyl-tRNA synthetase beta subunit</fullName>
        <shortName evidence="4">PheRS</shortName>
    </alternativeName>
</protein>
<gene>
    <name type="ordered locus">At1g72550</name>
    <name type="ORF">F28P22.26</name>
</gene>
<feature type="chain" id="PRO_0000127020" description="Phenylalanine--tRNA ligase beta subunit, cytoplasmic">
    <location>
        <begin position="1"/>
        <end position="598"/>
    </location>
</feature>
<feature type="domain" description="B5" evidence="3">
    <location>
        <begin position="303"/>
        <end position="383"/>
    </location>
</feature>
<feature type="binding site" evidence="3">
    <location>
        <position position="361"/>
    </location>
    <ligand>
        <name>Mg(2+)</name>
        <dbReference type="ChEBI" id="CHEBI:18420"/>
        <note>shared with alpha subunit</note>
    </ligand>
</feature>
<feature type="binding site" evidence="3">
    <location>
        <position position="367"/>
    </location>
    <ligand>
        <name>Mg(2+)</name>
        <dbReference type="ChEBI" id="CHEBI:18420"/>
        <note>shared with alpha subunit</note>
    </ligand>
</feature>
<feature type="binding site" evidence="3">
    <location>
        <position position="370"/>
    </location>
    <ligand>
        <name>Mg(2+)</name>
        <dbReference type="ChEBI" id="CHEBI:18420"/>
        <note>shared with alpha subunit</note>
    </ligand>
</feature>
<feature type="binding site" evidence="3">
    <location>
        <position position="371"/>
    </location>
    <ligand>
        <name>Mg(2+)</name>
        <dbReference type="ChEBI" id="CHEBI:18420"/>
        <note>shared with alpha subunit</note>
    </ligand>
</feature>
<proteinExistence type="evidence at transcript level"/>
<name>SYFB_ARATH</name>
<keyword id="KW-0025">Alternative splicing</keyword>
<keyword id="KW-0030">Aminoacyl-tRNA synthetase</keyword>
<keyword id="KW-0067">ATP-binding</keyword>
<keyword id="KW-0963">Cytoplasm</keyword>
<keyword id="KW-0436">Ligase</keyword>
<keyword id="KW-0460">Magnesium</keyword>
<keyword id="KW-0479">Metal-binding</keyword>
<keyword id="KW-0547">Nucleotide-binding</keyword>
<keyword id="KW-0648">Protein biosynthesis</keyword>
<keyword id="KW-1185">Reference proteome</keyword>
<accession>Q9SGE9</accession>
<evidence type="ECO:0000250" key="1"/>
<evidence type="ECO:0000250" key="2">
    <source>
        <dbReference type="UniProtKB" id="A5K464"/>
    </source>
</evidence>
<evidence type="ECO:0000255" key="3">
    <source>
        <dbReference type="PROSITE-ProRule" id="PRU00816"/>
    </source>
</evidence>
<evidence type="ECO:0000305" key="4"/>
<evidence type="ECO:0000305" key="5">
    <source>
    </source>
</evidence>
<evidence type="ECO:0000305" key="6">
    <source>
    </source>
</evidence>
<organism>
    <name type="scientific">Arabidopsis thaliana</name>
    <name type="common">Mouse-ear cress</name>
    <dbReference type="NCBI Taxonomy" id="3702"/>
    <lineage>
        <taxon>Eukaryota</taxon>
        <taxon>Viridiplantae</taxon>
        <taxon>Streptophyta</taxon>
        <taxon>Embryophyta</taxon>
        <taxon>Tracheophyta</taxon>
        <taxon>Spermatophyta</taxon>
        <taxon>Magnoliopsida</taxon>
        <taxon>eudicotyledons</taxon>
        <taxon>Gunneridae</taxon>
        <taxon>Pentapetalae</taxon>
        <taxon>rosids</taxon>
        <taxon>malvids</taxon>
        <taxon>Brassicales</taxon>
        <taxon>Brassicaceae</taxon>
        <taxon>Camelineae</taxon>
        <taxon>Arabidopsis</taxon>
    </lineage>
</organism>